<reference key="1">
    <citation type="journal article" date="2013" name="Plant Physiol.">
        <title>A Nostoc punctiforme Sugar Transporter Necessary to Establish a Cyanobacterium-Plant Symbiosis.</title>
        <authorList>
            <person name="Ekman M."/>
            <person name="Picossi S."/>
            <person name="Campbell E.L."/>
            <person name="Meeks J.C."/>
            <person name="Flores E."/>
        </authorList>
    </citation>
    <scope>NUCLEOTIDE SEQUENCE [LARGE SCALE GENOMIC DNA]</scope>
    <source>
        <strain>ATCC 29133 / PCC 73102</strain>
    </source>
</reference>
<protein>
    <recommendedName>
        <fullName evidence="1">Acetylglutamate kinase</fullName>
        <ecNumber evidence="1">2.7.2.8</ecNumber>
    </recommendedName>
    <alternativeName>
        <fullName evidence="1">N-acetyl-L-glutamate 5-phosphotransferase</fullName>
    </alternativeName>
    <alternativeName>
        <fullName evidence="1">NAG kinase</fullName>
        <shortName evidence="1">NAGK</shortName>
    </alternativeName>
</protein>
<comment type="function">
    <text evidence="1">Catalyzes the ATP-dependent phosphorylation of N-acetyl-L-glutamate.</text>
</comment>
<comment type="catalytic activity">
    <reaction evidence="1">
        <text>N-acetyl-L-glutamate + ATP = N-acetyl-L-glutamyl 5-phosphate + ADP</text>
        <dbReference type="Rhea" id="RHEA:14629"/>
        <dbReference type="ChEBI" id="CHEBI:30616"/>
        <dbReference type="ChEBI" id="CHEBI:44337"/>
        <dbReference type="ChEBI" id="CHEBI:57936"/>
        <dbReference type="ChEBI" id="CHEBI:456216"/>
        <dbReference type="EC" id="2.7.2.8"/>
    </reaction>
</comment>
<comment type="pathway">
    <text evidence="1">Amino-acid biosynthesis; L-arginine biosynthesis; N(2)-acetyl-L-ornithine from L-glutamate: step 2/4.</text>
</comment>
<comment type="subcellular location">
    <subcellularLocation>
        <location evidence="1">Cytoplasm</location>
    </subcellularLocation>
</comment>
<comment type="similarity">
    <text evidence="1">Belongs to the acetylglutamate kinase family. ArgB subfamily.</text>
</comment>
<accession>B2IX33</accession>
<keyword id="KW-0028">Amino-acid biosynthesis</keyword>
<keyword id="KW-0055">Arginine biosynthesis</keyword>
<keyword id="KW-0067">ATP-binding</keyword>
<keyword id="KW-0963">Cytoplasm</keyword>
<keyword id="KW-0418">Kinase</keyword>
<keyword id="KW-0547">Nucleotide-binding</keyword>
<keyword id="KW-1185">Reference proteome</keyword>
<keyword id="KW-0808">Transferase</keyword>
<feature type="chain" id="PRO_1000092868" description="Acetylglutamate kinase">
    <location>
        <begin position="1"/>
        <end position="298"/>
    </location>
</feature>
<feature type="binding site" evidence="1">
    <location>
        <begin position="73"/>
        <end position="74"/>
    </location>
    <ligand>
        <name>substrate</name>
    </ligand>
</feature>
<feature type="binding site" evidence="1">
    <location>
        <position position="95"/>
    </location>
    <ligand>
        <name>substrate</name>
    </ligand>
</feature>
<feature type="binding site" evidence="1">
    <location>
        <position position="188"/>
    </location>
    <ligand>
        <name>substrate</name>
    </ligand>
</feature>
<feature type="site" description="Transition state stabilizer" evidence="1">
    <location>
        <position position="38"/>
    </location>
</feature>
<feature type="site" description="Transition state stabilizer" evidence="1">
    <location>
        <position position="251"/>
    </location>
</feature>
<organism>
    <name type="scientific">Nostoc punctiforme (strain ATCC 29133 / PCC 73102)</name>
    <dbReference type="NCBI Taxonomy" id="63737"/>
    <lineage>
        <taxon>Bacteria</taxon>
        <taxon>Bacillati</taxon>
        <taxon>Cyanobacteriota</taxon>
        <taxon>Cyanophyceae</taxon>
        <taxon>Nostocales</taxon>
        <taxon>Nostocaceae</taxon>
        <taxon>Nostoc</taxon>
    </lineage>
</organism>
<evidence type="ECO:0000255" key="1">
    <source>
        <dbReference type="HAMAP-Rule" id="MF_00082"/>
    </source>
</evidence>
<name>ARGB_NOSP7</name>
<proteinExistence type="inferred from homology"/>
<sequence>MTDNDSEYIRQTEATRVRVLSEALPYIQQFAGRTVVVKYGGAAMKDSTLKDKVIRDIVFLSCVGLRPIVVHGGGPEINSWLDKLGIEPQFKNGLRVTDAATMDVVEMVLVGRVNKEIVALINQAGGLAVGLCGKDGNLFTARPQGQEGIGFVGEVSNVNIKILDTLASNGYIPVVSSVAADETGQAYNINADTVAGEIAAALGAEKLILLTDTSGILKDYKDQSTLIPKVDIREARELIVNGIVTGGMIPKVNCCVRSLAQGVRAAHIIDGRIPHALLLEIFTDVGIGTMILGSQFTS</sequence>
<gene>
    <name evidence="1" type="primary">argB</name>
    <name type="ordered locus">Npun_R6289</name>
</gene>
<dbReference type="EC" id="2.7.2.8" evidence="1"/>
<dbReference type="EMBL" id="CP001037">
    <property type="protein sequence ID" value="ACC84568.1"/>
    <property type="molecule type" value="Genomic_DNA"/>
</dbReference>
<dbReference type="RefSeq" id="WP_012412507.1">
    <property type="nucleotide sequence ID" value="NC_010628.1"/>
</dbReference>
<dbReference type="SMR" id="B2IX33"/>
<dbReference type="STRING" id="63737.Npun_R6289"/>
<dbReference type="EnsemblBacteria" id="ACC84568">
    <property type="protein sequence ID" value="ACC84568"/>
    <property type="gene ID" value="Npun_R6289"/>
</dbReference>
<dbReference type="KEGG" id="npu:Npun_R6289"/>
<dbReference type="eggNOG" id="COG0548">
    <property type="taxonomic scope" value="Bacteria"/>
</dbReference>
<dbReference type="HOGENOM" id="CLU_053680_0_0_3"/>
<dbReference type="OrthoDB" id="9803155at2"/>
<dbReference type="PhylomeDB" id="B2IX33"/>
<dbReference type="UniPathway" id="UPA00068">
    <property type="reaction ID" value="UER00107"/>
</dbReference>
<dbReference type="Proteomes" id="UP000001191">
    <property type="component" value="Chromosome"/>
</dbReference>
<dbReference type="GO" id="GO:0005737">
    <property type="term" value="C:cytoplasm"/>
    <property type="evidence" value="ECO:0007669"/>
    <property type="project" value="UniProtKB-SubCell"/>
</dbReference>
<dbReference type="GO" id="GO:0003991">
    <property type="term" value="F:acetylglutamate kinase activity"/>
    <property type="evidence" value="ECO:0007669"/>
    <property type="project" value="UniProtKB-UniRule"/>
</dbReference>
<dbReference type="GO" id="GO:0005524">
    <property type="term" value="F:ATP binding"/>
    <property type="evidence" value="ECO:0007669"/>
    <property type="project" value="UniProtKB-UniRule"/>
</dbReference>
<dbReference type="GO" id="GO:0042450">
    <property type="term" value="P:arginine biosynthetic process via ornithine"/>
    <property type="evidence" value="ECO:0007669"/>
    <property type="project" value="UniProtKB-UniRule"/>
</dbReference>
<dbReference type="GO" id="GO:0006526">
    <property type="term" value="P:L-arginine biosynthetic process"/>
    <property type="evidence" value="ECO:0007669"/>
    <property type="project" value="UniProtKB-UniPathway"/>
</dbReference>
<dbReference type="CDD" id="cd04250">
    <property type="entry name" value="AAK_NAGK-C"/>
    <property type="match status" value="1"/>
</dbReference>
<dbReference type="FunFam" id="3.40.1160.10:FF:000004">
    <property type="entry name" value="Acetylglutamate kinase"/>
    <property type="match status" value="1"/>
</dbReference>
<dbReference type="Gene3D" id="3.40.1160.10">
    <property type="entry name" value="Acetylglutamate kinase-like"/>
    <property type="match status" value="1"/>
</dbReference>
<dbReference type="HAMAP" id="MF_00082">
    <property type="entry name" value="ArgB"/>
    <property type="match status" value="1"/>
</dbReference>
<dbReference type="InterPro" id="IPR036393">
    <property type="entry name" value="AceGlu_kinase-like_sf"/>
</dbReference>
<dbReference type="InterPro" id="IPR004662">
    <property type="entry name" value="AcgluKinase_fam"/>
</dbReference>
<dbReference type="InterPro" id="IPR037528">
    <property type="entry name" value="ArgB"/>
</dbReference>
<dbReference type="InterPro" id="IPR001048">
    <property type="entry name" value="Asp/Glu/Uridylate_kinase"/>
</dbReference>
<dbReference type="InterPro" id="IPR001057">
    <property type="entry name" value="Glu/AcGlu_kinase"/>
</dbReference>
<dbReference type="InterPro" id="IPR041727">
    <property type="entry name" value="NAGK-C"/>
</dbReference>
<dbReference type="NCBIfam" id="TIGR00761">
    <property type="entry name" value="argB"/>
    <property type="match status" value="1"/>
</dbReference>
<dbReference type="PANTHER" id="PTHR23342">
    <property type="entry name" value="N-ACETYLGLUTAMATE SYNTHASE"/>
    <property type="match status" value="1"/>
</dbReference>
<dbReference type="PANTHER" id="PTHR23342:SF0">
    <property type="entry name" value="N-ACETYLGLUTAMATE SYNTHASE, MITOCHONDRIAL"/>
    <property type="match status" value="1"/>
</dbReference>
<dbReference type="Pfam" id="PF00696">
    <property type="entry name" value="AA_kinase"/>
    <property type="match status" value="1"/>
</dbReference>
<dbReference type="PIRSF" id="PIRSF000728">
    <property type="entry name" value="NAGK"/>
    <property type="match status" value="1"/>
</dbReference>
<dbReference type="PRINTS" id="PR00474">
    <property type="entry name" value="GLU5KINASE"/>
</dbReference>
<dbReference type="SUPFAM" id="SSF53633">
    <property type="entry name" value="Carbamate kinase-like"/>
    <property type="match status" value="1"/>
</dbReference>